<gene>
    <name type="ordered locus">At5g45920</name>
    <name type="ORF">K15I22.12</name>
</gene>
<dbReference type="EC" id="3.1.1.-"/>
<dbReference type="EMBL" id="AB016870">
    <property type="protein sequence ID" value="BAB09320.1"/>
    <property type="status" value="ALT_INIT"/>
    <property type="molecule type" value="Genomic_DNA"/>
</dbReference>
<dbReference type="EMBL" id="CP002688">
    <property type="protein sequence ID" value="AED95315.1"/>
    <property type="molecule type" value="Genomic_DNA"/>
</dbReference>
<dbReference type="EMBL" id="CP002688">
    <property type="protein sequence ID" value="ANM69473.1"/>
    <property type="molecule type" value="Genomic_DNA"/>
</dbReference>
<dbReference type="EMBL" id="BT010688">
    <property type="protein sequence ID" value="AAR20745.1"/>
    <property type="molecule type" value="mRNA"/>
</dbReference>
<dbReference type="EMBL" id="BT011587">
    <property type="protein sequence ID" value="AAS46640.1"/>
    <property type="molecule type" value="mRNA"/>
</dbReference>
<dbReference type="RefSeq" id="NP_001331144.1">
    <property type="nucleotide sequence ID" value="NM_001344650.1"/>
</dbReference>
<dbReference type="RefSeq" id="NP_199404.3">
    <property type="nucleotide sequence ID" value="NM_123960.5"/>
</dbReference>
<dbReference type="SMR" id="Q6NMR9"/>
<dbReference type="FunCoup" id="Q6NMR9">
    <property type="interactions" value="3063"/>
</dbReference>
<dbReference type="STRING" id="3702.Q6NMR9"/>
<dbReference type="PaxDb" id="3702-AT5G45920.1"/>
<dbReference type="ProteomicsDB" id="247111"/>
<dbReference type="DNASU" id="834632"/>
<dbReference type="EnsemblPlants" id="AT5G45920.1">
    <property type="protein sequence ID" value="AT5G45920.1"/>
    <property type="gene ID" value="AT5G45920"/>
</dbReference>
<dbReference type="EnsemblPlants" id="AT5G45920.4">
    <property type="protein sequence ID" value="AT5G45920.4"/>
    <property type="gene ID" value="AT5G45920"/>
</dbReference>
<dbReference type="GeneID" id="834632"/>
<dbReference type="Gramene" id="AT5G45920.1">
    <property type="protein sequence ID" value="AT5G45920.1"/>
    <property type="gene ID" value="AT5G45920"/>
</dbReference>
<dbReference type="Gramene" id="AT5G45920.4">
    <property type="protein sequence ID" value="AT5G45920.4"/>
    <property type="gene ID" value="AT5G45920"/>
</dbReference>
<dbReference type="KEGG" id="ath:AT5G45920"/>
<dbReference type="Araport" id="AT5G45920"/>
<dbReference type="TAIR" id="AT5G45920"/>
<dbReference type="eggNOG" id="KOG3035">
    <property type="taxonomic scope" value="Eukaryota"/>
</dbReference>
<dbReference type="HOGENOM" id="CLU_051989_0_2_1"/>
<dbReference type="InParanoid" id="Q6NMR9"/>
<dbReference type="OMA" id="KMQQFPG"/>
<dbReference type="OrthoDB" id="671439at2759"/>
<dbReference type="PhylomeDB" id="Q6NMR9"/>
<dbReference type="PRO" id="PR:Q6NMR9"/>
<dbReference type="Proteomes" id="UP000006548">
    <property type="component" value="Chromosome 5"/>
</dbReference>
<dbReference type="ExpressionAtlas" id="Q6NMR9">
    <property type="expression patterns" value="baseline and differential"/>
</dbReference>
<dbReference type="GO" id="GO:0016788">
    <property type="term" value="F:hydrolase activity, acting on ester bonds"/>
    <property type="evidence" value="ECO:0007669"/>
    <property type="project" value="InterPro"/>
</dbReference>
<dbReference type="GO" id="GO:0016042">
    <property type="term" value="P:lipid catabolic process"/>
    <property type="evidence" value="ECO:0007669"/>
    <property type="project" value="UniProtKB-KW"/>
</dbReference>
<dbReference type="CDD" id="cd01838">
    <property type="entry name" value="Isoamyl_acetate_hydrolase_like"/>
    <property type="match status" value="1"/>
</dbReference>
<dbReference type="FunFam" id="3.40.50.1110:FF:000002">
    <property type="entry name" value="isoamyl acetate-hydrolyzing esterase 1 homolog"/>
    <property type="match status" value="1"/>
</dbReference>
<dbReference type="Gene3D" id="3.40.50.1110">
    <property type="entry name" value="SGNH hydrolase"/>
    <property type="match status" value="1"/>
</dbReference>
<dbReference type="InterPro" id="IPR001087">
    <property type="entry name" value="GDSL"/>
</dbReference>
<dbReference type="InterPro" id="IPR045136">
    <property type="entry name" value="Iah1-like"/>
</dbReference>
<dbReference type="InterPro" id="IPR036514">
    <property type="entry name" value="SGNH_hydro_sf"/>
</dbReference>
<dbReference type="PANTHER" id="PTHR14209">
    <property type="entry name" value="ISOAMYL ACETATE-HYDROLYZING ESTERASE 1"/>
    <property type="match status" value="1"/>
</dbReference>
<dbReference type="PANTHER" id="PTHR14209:SF19">
    <property type="entry name" value="ISOAMYL ACETATE-HYDROLYZING ESTERASE 1 HOMOLOG"/>
    <property type="match status" value="1"/>
</dbReference>
<dbReference type="Pfam" id="PF00657">
    <property type="entry name" value="Lipase_GDSL"/>
    <property type="match status" value="1"/>
</dbReference>
<dbReference type="SUPFAM" id="SSF52266">
    <property type="entry name" value="SGNH hydrolase"/>
    <property type="match status" value="1"/>
</dbReference>
<reference key="1">
    <citation type="journal article" date="1998" name="DNA Res.">
        <title>Structural analysis of Arabidopsis thaliana chromosome 5. VIII. Sequence features of the regions of 1,081,958 bp covered by seventeen physically assigned P1 and TAC clones.</title>
        <authorList>
            <person name="Asamizu E."/>
            <person name="Sato S."/>
            <person name="Kaneko T."/>
            <person name="Nakamura Y."/>
            <person name="Kotani H."/>
            <person name="Miyajima N."/>
            <person name="Tabata S."/>
        </authorList>
    </citation>
    <scope>NUCLEOTIDE SEQUENCE [LARGE SCALE GENOMIC DNA]</scope>
    <source>
        <strain>cv. Columbia</strain>
    </source>
</reference>
<reference key="2">
    <citation type="journal article" date="2017" name="Plant J.">
        <title>Araport11: a complete reannotation of the Arabidopsis thaliana reference genome.</title>
        <authorList>
            <person name="Cheng C.Y."/>
            <person name="Krishnakumar V."/>
            <person name="Chan A.P."/>
            <person name="Thibaud-Nissen F."/>
            <person name="Schobel S."/>
            <person name="Town C.D."/>
        </authorList>
    </citation>
    <scope>GENOME REANNOTATION</scope>
    <source>
        <strain>cv. Columbia</strain>
    </source>
</reference>
<reference key="3">
    <citation type="submission" date="2004-02" db="EMBL/GenBank/DDBJ databases">
        <title>Arabidopsis ORF clones.</title>
        <authorList>
            <person name="Shinn P."/>
            <person name="Chen H."/>
            <person name="Cheuk R.F."/>
            <person name="Kim C.J."/>
            <person name="Ecker J.R."/>
        </authorList>
    </citation>
    <scope>NUCLEOTIDE SEQUENCE [LARGE SCALE MRNA]</scope>
    <source>
        <strain>cv. Columbia</strain>
    </source>
</reference>
<reference key="4">
    <citation type="journal article" date="2004" name="Prog. Lipid Res.">
        <title>GDSL family of serine esterases/lipases.</title>
        <authorList>
            <person name="Akoh C.C."/>
            <person name="Lee G.-C."/>
            <person name="Liaw Y.-C."/>
            <person name="Huang T.-H."/>
            <person name="Shaw J.-F."/>
        </authorList>
    </citation>
    <scope>REVIEW</scope>
</reference>
<reference key="5">
    <citation type="journal article" date="2008" name="Pak. J. Biol. Sci.">
        <title>Sequence analysis of GDSL lipase gene family in Arabidopsis thaliana.</title>
        <authorList>
            <person name="Ling H."/>
        </authorList>
    </citation>
    <scope>GENE FAMILY</scope>
</reference>
<evidence type="ECO:0000250" key="1"/>
<evidence type="ECO:0000305" key="2"/>
<comment type="similarity">
    <text evidence="2">Belongs to the 'GDSL' lipolytic enzyme family.</text>
</comment>
<comment type="sequence caution" evidence="2">
    <conflict type="erroneous initiation">
        <sequence resource="EMBL-CDS" id="BAB09320"/>
    </conflict>
</comment>
<organism>
    <name type="scientific">Arabidopsis thaliana</name>
    <name type="common">Mouse-ear cress</name>
    <dbReference type="NCBI Taxonomy" id="3702"/>
    <lineage>
        <taxon>Eukaryota</taxon>
        <taxon>Viridiplantae</taxon>
        <taxon>Streptophyta</taxon>
        <taxon>Embryophyta</taxon>
        <taxon>Tracheophyta</taxon>
        <taxon>Spermatophyta</taxon>
        <taxon>Magnoliopsida</taxon>
        <taxon>eudicotyledons</taxon>
        <taxon>Gunneridae</taxon>
        <taxon>Pentapetalae</taxon>
        <taxon>rosids</taxon>
        <taxon>malvids</taxon>
        <taxon>Brassicales</taxon>
        <taxon>Brassicaceae</taxon>
        <taxon>Camelineae</taxon>
        <taxon>Arabidopsis</taxon>
    </lineage>
</organism>
<proteinExistence type="evidence at transcript level"/>
<keyword id="KW-0378">Hydrolase</keyword>
<keyword id="KW-0442">Lipid degradation</keyword>
<keyword id="KW-0443">Lipid metabolism</keyword>
<keyword id="KW-1185">Reference proteome</keyword>
<protein>
    <recommendedName>
        <fullName>GDSL esterase/lipase At5g45920</fullName>
        <ecNumber>3.1.1.-</ecNumber>
    </recommendedName>
</protein>
<feature type="chain" id="PRO_0000367424" description="GDSL esterase/lipase At5g45920">
    <location>
        <begin position="1"/>
        <end position="241"/>
    </location>
</feature>
<feature type="active site" description="Nucleophile" evidence="1">
    <location>
        <position position="12"/>
    </location>
</feature>
<feature type="active site" evidence="1">
    <location>
        <position position="189"/>
    </location>
</feature>
<feature type="active site" evidence="1">
    <location>
        <position position="192"/>
    </location>
</feature>
<accession>Q6NMR9</accession>
<accession>Q9FJ44</accession>
<sequence>MMRRKIFLFGDSITEESFSDGGWGASLADLLRRKADMVLRGYSGYNTRWALKVVERVFPVAEEDGGDSPAAVTVFFGANDACLPERCSGFQHVPLHEYKQNLRSIVSFLKNRWPQTAIILITPPPIDEEARLRYPYIENTTGLPERTNEVAGLYAKACIAVAEECQISVTDLWSKMQQIPNWQTECLWDGLHLSRVGNKVVFEEVAKKLKEEGIGAEDLAVDLPLIEDVDPKDPLKSFDEF</sequence>
<name>GDL84_ARATH</name>